<keyword id="KW-0903">Direct protein sequencing</keyword>
<keyword id="KW-1015">Disulfide bond</keyword>
<keyword id="KW-0872">Ion channel impairing toxin</keyword>
<keyword id="KW-0960">Knottin</keyword>
<keyword id="KW-0528">Neurotoxin</keyword>
<keyword id="KW-0964">Secreted</keyword>
<keyword id="KW-0800">Toxin</keyword>
<keyword id="KW-0738">Voltage-gated sodium channel impairing toxin</keyword>
<sequence length="36" mass="3934">ADCLNEGDWCADWSGPSCCGEMWCSCPGFGKCRCKK</sequence>
<proteinExistence type="evidence at protein level"/>
<comment type="function">
    <text evidence="1 3">Binds at site 4 of sodium channels (Nav) and inhibits the fast inactivation of cockroach channels. This toxin is active only on insects (By similarity). Has a potent activity against S.litura larvae.</text>
</comment>
<comment type="subcellular location">
    <subcellularLocation>
        <location evidence="3">Secreted</location>
    </subcellularLocation>
</comment>
<comment type="tissue specificity">
    <text evidence="6">Expressed by the venom gland.</text>
</comment>
<comment type="domain">
    <text evidence="5">The presence of a 'disulfide through disulfide knot' structurally defines this protein as a knottin.</text>
</comment>
<comment type="mass spectrometry" mass="3926.2" method="MALDI" evidence="3"/>
<comment type="similarity">
    <text evidence="5">Belongs to the neurotoxin 07 (Beta/delta-agtx) family.</text>
</comment>
<feature type="peptide" id="PRO_0000044963" description="Delta-amaurobitoxin-Pl1c" evidence="3">
    <location>
        <begin position="1"/>
        <end position="36"/>
    </location>
</feature>
<feature type="disulfide bond" evidence="2">
    <location>
        <begin position="3"/>
        <end position="19"/>
    </location>
</feature>
<feature type="disulfide bond" evidence="2">
    <location>
        <begin position="10"/>
        <end position="24"/>
    </location>
</feature>
<feature type="disulfide bond" evidence="2">
    <location>
        <begin position="18"/>
        <end position="34"/>
    </location>
</feature>
<feature type="disulfide bond" evidence="2">
    <location>
        <begin position="26"/>
        <end position="32"/>
    </location>
</feature>
<reference key="1">
    <citation type="journal article" date="2000" name="Eur. J. Biochem.">
        <title>Isolation, synthesis and pharmacological characterization of delta-palutoxins IT, novel insecticidal toxins from the spider Paracoelotes luctuosus (Amaurobiidae).</title>
        <authorList>
            <person name="Corzo G."/>
            <person name="Escoubas P."/>
            <person name="Stankiewicz M."/>
            <person name="Pelhate M."/>
            <person name="Kristensen C.P."/>
            <person name="Nakajima T."/>
        </authorList>
    </citation>
    <scope>PROTEIN SEQUENCE</scope>
    <scope>FUNCTION</scope>
    <scope>MASS SPECTROMETRY</scope>
    <scope>SUBCELLULAR LOCATION</scope>
    <source>
        <tissue>Venom</tissue>
    </source>
</reference>
<name>TXDP3_PIRLC</name>
<protein>
    <recommendedName>
        <fullName>Delta-amaurobitoxin-Pl1c</fullName>
        <shortName>Delta-AMATX-Pl1c</shortName>
    </recommendedName>
    <alternativeName>
        <fullName evidence="4">Delta-palutoxin IT3</fullName>
        <shortName evidence="4">Delta-paluIT3</shortName>
    </alternativeName>
</protein>
<evidence type="ECO:0000250" key="1"/>
<evidence type="ECO:0000250" key="2">
    <source>
        <dbReference type="UniProtKB" id="P83257"/>
    </source>
</evidence>
<evidence type="ECO:0000269" key="3">
    <source>
    </source>
</evidence>
<evidence type="ECO:0000303" key="4">
    <source>
    </source>
</evidence>
<evidence type="ECO:0000305" key="5"/>
<evidence type="ECO:0000305" key="6">
    <source>
    </source>
</evidence>
<dbReference type="SMR" id="P83258"/>
<dbReference type="ArachnoServer" id="AS000303">
    <property type="toxin name" value="delta-Amaurobitoxin-Pl1c"/>
</dbReference>
<dbReference type="GO" id="GO:0005576">
    <property type="term" value="C:extracellular region"/>
    <property type="evidence" value="ECO:0007669"/>
    <property type="project" value="UniProtKB-SubCell"/>
</dbReference>
<dbReference type="GO" id="GO:0019871">
    <property type="term" value="F:sodium channel inhibitor activity"/>
    <property type="evidence" value="ECO:0000314"/>
    <property type="project" value="GO_Central"/>
</dbReference>
<dbReference type="GO" id="GO:0090729">
    <property type="term" value="F:toxin activity"/>
    <property type="evidence" value="ECO:0000314"/>
    <property type="project" value="UniProtKB"/>
</dbReference>
<dbReference type="GO" id="GO:0044493">
    <property type="term" value="P:envenomation resulting in negative regulation of voltage-gated sodium channel activity in another organism"/>
    <property type="evidence" value="ECO:0000314"/>
    <property type="project" value="UniProtKB"/>
</dbReference>
<dbReference type="InterPro" id="IPR016328">
    <property type="entry name" value="Beta/delta-agatoxin_fam"/>
</dbReference>
<dbReference type="Pfam" id="PF05980">
    <property type="entry name" value="Toxin_7"/>
    <property type="match status" value="1"/>
</dbReference>
<dbReference type="PIRSF" id="PIRSF001882">
    <property type="entry name" value="Curtatoxin"/>
    <property type="match status" value="1"/>
</dbReference>
<dbReference type="SUPFAM" id="SSF57059">
    <property type="entry name" value="omega toxin-like"/>
    <property type="match status" value="1"/>
</dbReference>
<dbReference type="PROSITE" id="PS60015">
    <property type="entry name" value="MU_AGATOXIN"/>
    <property type="match status" value="1"/>
</dbReference>
<accession>P83258</accession>
<organism>
    <name type="scientific">Pireneitega luctuosa</name>
    <name type="common">Tangled nest spider</name>
    <name type="synonym">Paracoelotes luctuosus</name>
    <dbReference type="NCBI Taxonomy" id="185217"/>
    <lineage>
        <taxon>Eukaryota</taxon>
        <taxon>Metazoa</taxon>
        <taxon>Ecdysozoa</taxon>
        <taxon>Arthropoda</taxon>
        <taxon>Chelicerata</taxon>
        <taxon>Arachnida</taxon>
        <taxon>Araneae</taxon>
        <taxon>Araneomorphae</taxon>
        <taxon>Entelegynae</taxon>
        <taxon>Agelenidae</taxon>
        <taxon>Pireneitega</taxon>
    </lineage>
</organism>